<feature type="chain" id="PRO_0000272949" description="Large ribosomal subunit protein uL23">
    <location>
        <begin position="1"/>
        <end position="78"/>
    </location>
</feature>
<name>RL23_NANEQ</name>
<dbReference type="EMBL" id="AE017199">
    <property type="protein sequence ID" value="AAR38920.1"/>
    <property type="molecule type" value="Genomic_DNA"/>
</dbReference>
<dbReference type="SMR" id="Q74N77"/>
<dbReference type="STRING" id="228908.NEQ065"/>
<dbReference type="EnsemblBacteria" id="AAR38920">
    <property type="protein sequence ID" value="AAR38920"/>
    <property type="gene ID" value="NEQ065"/>
</dbReference>
<dbReference type="KEGG" id="neq:NEQ065"/>
<dbReference type="HOGENOM" id="CLU_037562_4_2_2"/>
<dbReference type="Proteomes" id="UP000000578">
    <property type="component" value="Chromosome"/>
</dbReference>
<dbReference type="GO" id="GO:1990904">
    <property type="term" value="C:ribonucleoprotein complex"/>
    <property type="evidence" value="ECO:0007669"/>
    <property type="project" value="UniProtKB-KW"/>
</dbReference>
<dbReference type="GO" id="GO:0005840">
    <property type="term" value="C:ribosome"/>
    <property type="evidence" value="ECO:0007669"/>
    <property type="project" value="UniProtKB-KW"/>
</dbReference>
<dbReference type="GO" id="GO:0019843">
    <property type="term" value="F:rRNA binding"/>
    <property type="evidence" value="ECO:0007669"/>
    <property type="project" value="UniProtKB-UniRule"/>
</dbReference>
<dbReference type="GO" id="GO:0003735">
    <property type="term" value="F:structural constituent of ribosome"/>
    <property type="evidence" value="ECO:0007669"/>
    <property type="project" value="InterPro"/>
</dbReference>
<dbReference type="GO" id="GO:0006412">
    <property type="term" value="P:translation"/>
    <property type="evidence" value="ECO:0007669"/>
    <property type="project" value="UniProtKB-UniRule"/>
</dbReference>
<dbReference type="CDD" id="cd00590">
    <property type="entry name" value="RRM_SF"/>
    <property type="match status" value="1"/>
</dbReference>
<dbReference type="Gene3D" id="3.30.70.330">
    <property type="match status" value="1"/>
</dbReference>
<dbReference type="HAMAP" id="MF_01369_A">
    <property type="entry name" value="Ribosomal_uL23_A"/>
    <property type="match status" value="1"/>
</dbReference>
<dbReference type="InterPro" id="IPR012677">
    <property type="entry name" value="Nucleotide-bd_a/b_plait_sf"/>
</dbReference>
<dbReference type="InterPro" id="IPR013025">
    <property type="entry name" value="Ribosomal_uL23-like"/>
</dbReference>
<dbReference type="InterPro" id="IPR012678">
    <property type="entry name" value="Ribosomal_uL23/eL15/eS24_sf"/>
</dbReference>
<dbReference type="InterPro" id="IPR000504">
    <property type="entry name" value="RRM_dom"/>
</dbReference>
<dbReference type="PANTHER" id="PTHR11620">
    <property type="entry name" value="60S RIBOSOMAL PROTEIN L23A"/>
    <property type="match status" value="1"/>
</dbReference>
<dbReference type="Pfam" id="PF00276">
    <property type="entry name" value="Ribosomal_L23"/>
    <property type="match status" value="1"/>
</dbReference>
<dbReference type="Pfam" id="PF00076">
    <property type="entry name" value="RRM_1"/>
    <property type="match status" value="1"/>
</dbReference>
<dbReference type="SUPFAM" id="SSF54189">
    <property type="entry name" value="Ribosomal proteins S24e, L23 and L15e"/>
    <property type="match status" value="1"/>
</dbReference>
<evidence type="ECO:0000255" key="1">
    <source>
        <dbReference type="HAMAP-Rule" id="MF_01369"/>
    </source>
</evidence>
<evidence type="ECO:0000305" key="2"/>
<accession>Q74N77</accession>
<keyword id="KW-1185">Reference proteome</keyword>
<keyword id="KW-0687">Ribonucleoprotein</keyword>
<keyword id="KW-0689">Ribosomal protein</keyword>
<keyword id="KW-0694">RNA-binding</keyword>
<keyword id="KW-0699">rRNA-binding</keyword>
<gene>
    <name evidence="1" type="primary">rpl23</name>
    <name type="ordered locus">NEQ065</name>
</gene>
<comment type="function">
    <text evidence="1">Binds to 23S rRNA. One of the proteins that surrounds the polypeptide exit tunnel on the outside of the ribosome.</text>
</comment>
<comment type="subunit">
    <text evidence="1">Part of the 50S ribosomal subunit. Contacts protein L29.</text>
</comment>
<comment type="similarity">
    <text evidence="1">Belongs to the universal ribosomal protein uL23 family.</text>
</comment>
<proteinExistence type="inferred from homology"/>
<organism>
    <name type="scientific">Nanoarchaeum equitans (strain Kin4-M)</name>
    <dbReference type="NCBI Taxonomy" id="228908"/>
    <lineage>
        <taxon>Archaea</taxon>
        <taxon>Nanobdellota</taxon>
        <taxon>Candidatus Nanoarchaeia</taxon>
        <taxon>Nanoarchaeales</taxon>
        <taxon>Nanoarchaeaceae</taxon>
        <taxon>Nanoarchaeum</taxon>
    </lineage>
</organism>
<reference key="1">
    <citation type="journal article" date="2003" name="Proc. Natl. Acad. Sci. U.S.A.">
        <title>The genome of Nanoarchaeum equitans: insights into early archaeal evolution and derived parasitism.</title>
        <authorList>
            <person name="Waters E."/>
            <person name="Hohn M.J."/>
            <person name="Ahel I."/>
            <person name="Graham D.E."/>
            <person name="Adams M.D."/>
            <person name="Barnstead M."/>
            <person name="Beeson K.Y."/>
            <person name="Bibbs L."/>
            <person name="Bolanos R."/>
            <person name="Keller M."/>
            <person name="Kretz K."/>
            <person name="Lin X."/>
            <person name="Mathur E."/>
            <person name="Ni J."/>
            <person name="Podar M."/>
            <person name="Richardson T."/>
            <person name="Sutton G.G."/>
            <person name="Simon M."/>
            <person name="Soell D."/>
            <person name="Stetter K.O."/>
            <person name="Short J.M."/>
            <person name="Noorderwier M."/>
        </authorList>
    </citation>
    <scope>NUCLEOTIDE SEQUENCE [LARGE SCALE GENOMIC DNA]</scope>
    <source>
        <strain>Kin4-M</strain>
    </source>
</reference>
<sequence length="78" mass="9108">MMLLQTEKALRLLEQYNTITILVPREYTKSKIKEFFEKKGYKVKKVNTLITKKGLKKAYVRFKEEGVARKVAEELGGL</sequence>
<protein>
    <recommendedName>
        <fullName evidence="1">Large ribosomal subunit protein uL23</fullName>
    </recommendedName>
    <alternativeName>
        <fullName evidence="2">50S ribosomal protein L23</fullName>
    </alternativeName>
</protein>